<evidence type="ECO:0000255" key="1">
    <source>
        <dbReference type="HAMAP-Rule" id="MF_04076"/>
    </source>
</evidence>
<evidence type="ECO:0000256" key="2">
    <source>
        <dbReference type="SAM" id="MobiDB-lite"/>
    </source>
</evidence>
<evidence type="ECO:0000269" key="3">
    <source>
    </source>
</evidence>
<dbReference type="EMBL" id="D00630">
    <property type="protein sequence ID" value="BAA00523.1"/>
    <property type="molecule type" value="Genomic_DNA"/>
</dbReference>
<dbReference type="SMR" id="Q81102"/>
<dbReference type="Proteomes" id="UP000007921">
    <property type="component" value="Genome"/>
</dbReference>
<dbReference type="GO" id="GO:0043657">
    <property type="term" value="C:host cell"/>
    <property type="evidence" value="ECO:0007669"/>
    <property type="project" value="GOC"/>
</dbReference>
<dbReference type="GO" id="GO:0030430">
    <property type="term" value="C:host cell cytoplasm"/>
    <property type="evidence" value="ECO:0007669"/>
    <property type="project" value="UniProtKB-SubCell"/>
</dbReference>
<dbReference type="GO" id="GO:0039619">
    <property type="term" value="C:T=4 icosahedral viral capsid"/>
    <property type="evidence" value="ECO:0007669"/>
    <property type="project" value="UniProtKB-UniRule"/>
</dbReference>
<dbReference type="GO" id="GO:0003677">
    <property type="term" value="F:DNA binding"/>
    <property type="evidence" value="ECO:0007669"/>
    <property type="project" value="UniProtKB-UniRule"/>
</dbReference>
<dbReference type="GO" id="GO:0003723">
    <property type="term" value="F:RNA binding"/>
    <property type="evidence" value="ECO:0007669"/>
    <property type="project" value="UniProtKB-UniRule"/>
</dbReference>
<dbReference type="GO" id="GO:0005198">
    <property type="term" value="F:structural molecule activity"/>
    <property type="evidence" value="ECO:0007669"/>
    <property type="project" value="UniProtKB-UniRule"/>
</dbReference>
<dbReference type="GO" id="GO:0075521">
    <property type="term" value="P:microtubule-dependent intracellular transport of viral material towards nucleus"/>
    <property type="evidence" value="ECO:0007669"/>
    <property type="project" value="UniProtKB-UniRule"/>
</dbReference>
<dbReference type="GO" id="GO:0046718">
    <property type="term" value="P:symbiont entry into host cell"/>
    <property type="evidence" value="ECO:0007669"/>
    <property type="project" value="UniProtKB-UniRule"/>
</dbReference>
<dbReference type="GO" id="GO:0075732">
    <property type="term" value="P:viral penetration into host nucleus"/>
    <property type="evidence" value="ECO:0007669"/>
    <property type="project" value="UniProtKB-UniRule"/>
</dbReference>
<dbReference type="FunFam" id="1.10.4090.10:FF:000001">
    <property type="entry name" value="Capsid protein"/>
    <property type="match status" value="1"/>
</dbReference>
<dbReference type="Gene3D" id="1.10.4090.10">
    <property type="entry name" value="Viral capsid, core domain supefamily, Hepatitis B virus"/>
    <property type="match status" value="1"/>
</dbReference>
<dbReference type="HAMAP" id="MF_04076">
    <property type="entry name" value="HBV_HBEAG"/>
    <property type="match status" value="1"/>
</dbReference>
<dbReference type="InterPro" id="IPR002006">
    <property type="entry name" value="Hepatitis_core"/>
</dbReference>
<dbReference type="InterPro" id="IPR036459">
    <property type="entry name" value="Viral_capsid_core_dom_sf_HBV"/>
</dbReference>
<dbReference type="Pfam" id="PF00906">
    <property type="entry name" value="Hepatitis_core"/>
    <property type="match status" value="3"/>
</dbReference>
<dbReference type="SUPFAM" id="SSF47852">
    <property type="entry name" value="Hepatitis B viral capsid (hbcag)"/>
    <property type="match status" value="1"/>
</dbReference>
<feature type="chain" id="PRO_0000324363" description="Capsid protein">
    <location>
        <begin position="1"/>
        <end position="183"/>
    </location>
</feature>
<feature type="repeat" description="1; half-length">
    <location>
        <begin position="155"/>
        <end position="160"/>
    </location>
</feature>
<feature type="repeat" description="2">
    <location>
        <begin position="162"/>
        <end position="168"/>
    </location>
</feature>
<feature type="repeat" description="3">
    <location>
        <begin position="170"/>
        <end position="176"/>
    </location>
</feature>
<feature type="region of interest" description="Disordered" evidence="2">
    <location>
        <begin position="143"/>
        <end position="183"/>
    </location>
</feature>
<feature type="region of interest" description="3 X 7 AA repeats of S-P-R-R-R-[PR]-S">
    <location>
        <begin position="155"/>
        <end position="176"/>
    </location>
</feature>
<feature type="region of interest" description="RNA binding" evidence="1">
    <location>
        <begin position="177"/>
        <end position="183"/>
    </location>
</feature>
<feature type="short sequence motif" description="Bipartite nuclear localization signal" evidence="1">
    <location>
        <begin position="158"/>
        <end position="175"/>
    </location>
</feature>
<feature type="compositionally biased region" description="Basic residues" evidence="2">
    <location>
        <begin position="149"/>
        <end position="176"/>
    </location>
</feature>
<feature type="modified residue" description="Phosphoserine; by host" evidence="1">
    <location>
        <position position="155"/>
    </location>
</feature>
<feature type="modified residue" description="Phosphoserine; by host" evidence="1">
    <location>
        <position position="162"/>
    </location>
</feature>
<feature type="modified residue" description="Phosphoserine; by host" evidence="1">
    <location>
        <position position="170"/>
    </location>
</feature>
<feature type="mutagenesis site" description="No effect on capsid stability." evidence="3">
    <original>I</original>
    <variation>L</variation>
    <location>
        <position position="97"/>
    </location>
</feature>
<organismHost>
    <name type="scientific">Homo sapiens</name>
    <name type="common">Human</name>
    <dbReference type="NCBI Taxonomy" id="9606"/>
</organismHost>
<protein>
    <recommendedName>
        <fullName evidence="1">Capsid protein</fullName>
    </recommendedName>
    <alternativeName>
        <fullName evidence="1">Core antigen</fullName>
    </alternativeName>
    <alternativeName>
        <fullName evidence="1">Core protein</fullName>
    </alternativeName>
    <alternativeName>
        <fullName evidence="1">HBcAg</fullName>
    </alternativeName>
    <alternativeName>
        <fullName evidence="1">p21.5</fullName>
    </alternativeName>
</protein>
<proteinExistence type="evidence at protein level"/>
<keyword id="KW-0024">Alternative initiation</keyword>
<keyword id="KW-0167">Capsid protein</keyword>
<keyword id="KW-1176">Cytoplasmic inwards viral transport</keyword>
<keyword id="KW-0238">DNA-binding</keyword>
<keyword id="KW-1035">Host cytoplasm</keyword>
<keyword id="KW-0945">Host-virus interaction</keyword>
<keyword id="KW-1177">Microtubular inwards viral transport</keyword>
<keyword id="KW-0597">Phosphoprotein</keyword>
<keyword id="KW-1185">Reference proteome</keyword>
<keyword id="KW-0677">Repeat</keyword>
<keyword id="KW-0694">RNA-binding</keyword>
<keyword id="KW-1144">T=4 icosahedral capsid protein</keyword>
<keyword id="KW-1163">Viral penetration into host nucleus</keyword>
<keyword id="KW-0946">Virion</keyword>
<keyword id="KW-1160">Virus entry into host cell</keyword>
<organism>
    <name type="scientific">Hepatitis B virus genotype C subtype adr (isolate Japan/Nishioka/1983)</name>
    <name type="common">HBV-C</name>
    <dbReference type="NCBI Taxonomy" id="482133"/>
    <lineage>
        <taxon>Viruses</taxon>
        <taxon>Riboviria</taxon>
        <taxon>Pararnavirae</taxon>
        <taxon>Artverviricota</taxon>
        <taxon>Revtraviricetes</taxon>
        <taxon>Blubervirales</taxon>
        <taxon>Hepadnaviridae</taxon>
        <taxon>Orthohepadnavirus</taxon>
        <taxon>Hepatitis B virus</taxon>
    </lineage>
</organism>
<accession>Q81102</accession>
<gene>
    <name evidence="1" type="primary">C</name>
</gene>
<sequence>MDIDTYKEFGASVELLSFLPSDFFPSIRDLLDTAFALHREALESPEHCSPHHTALRQAIVCWGELMNLATWVGSNLEDPASRELVVSYVNVNMGLKIRQLLWFHISCLTFGRETVLEYLVSVGVWIRTPQAYRPPNAPILSTLPETTVVRRRGRSPRRRTPSPRRRRSKSPRRRRSQSRESQC</sequence>
<name>CAPSD_HBVC1</name>
<reference key="1">
    <citation type="journal article" date="1983" name="Nucleic Acids Res.">
        <title>The complete nucleotide sequences of the cloned hepatitis B virus DNA; subtype adr and adw.</title>
        <authorList>
            <person name="Ono Y."/>
            <person name="Onda H."/>
            <person name="Sasada R."/>
            <person name="Igarashi K."/>
            <person name="Sugino Y."/>
            <person name="Nishioka K."/>
        </authorList>
    </citation>
    <scope>NUCLEOTIDE SEQUENCE [GENOMIC DNA]</scope>
</reference>
<reference key="2">
    <citation type="journal article" date="2003" name="J. Virol.">
        <title>Stability and morphology comparisons of self-assembled virus-like particles from wild-type and mutant human hepatitis B virus capsid proteins.</title>
        <authorList>
            <person name="Newman M."/>
            <person name="Suk F.M."/>
            <person name="Cajimat M."/>
            <person name="Chua P.K."/>
            <person name="Shih C."/>
        </authorList>
    </citation>
    <scope>MUTAGENESIS OF ILE-97</scope>
</reference>
<comment type="function">
    <text evidence="1">Self assembles to form an icosahedral capsid. Most capsids appear to be large particles with an icosahedral symmetry of T=4 and consist of 240 copies of capsid protein, though a fraction forms smaller T=3 particles consisting of 180 capsid proteins. Entering capsids are transported along microtubules to the nucleus. Phosphorylation of the capsid is thought to induce exposure of nuclear localization signal in the C-terminal portion of the capsid protein that allows binding to the nuclear pore complex via the importin (karyopherin-) alpha and beta. Capsids are imported in intact form through the nuclear pore into the nuclear basket, where it probably binds NUP153. Only capsids that contain the mature viral genome can release the viral DNA and capsid protein into the nucleoplasm. Immature capsids get stuck in the basket. Capsids encapsulate the pre-genomic RNA and the P protein. Pre-genomic RNA is reverse-transcribed into DNA while the capsid is still in the cytoplasm. The capsid can then either be directed to the nucleus, providing more genomes for transcription, or bud through the endoplasmic reticulum to provide new virions.</text>
</comment>
<comment type="subunit">
    <text evidence="1">Homodimerizes, then multimerizes. Interacts with cytosol exposed regions of viral L glycoprotein present in the reticulum-to-Golgi compartment. Interacts with human FLNB. Phosphorylated form interacts with host importin alpha; this interaction depends on the exposure of the NLS, which itself depends upon genome maturation and/or phosphorylation of the capsid protein. Interacts with host NUP153.</text>
</comment>
<comment type="subcellular location">
    <subcellularLocation>
        <location evidence="1">Virion</location>
    </subcellularLocation>
    <subcellularLocation>
        <location evidence="1">Host cytoplasm</location>
    </subcellularLocation>
</comment>
<comment type="alternative products">
    <event type="alternative initiation"/>
    <isoform>
        <id>Q81102-1</id>
        <name>Capsid protein</name>
        <sequence type="displayed"/>
    </isoform>
    <isoform>
        <id>P0C6H3-1</id>
        <name>External core antigen</name>
        <sequence type="external"/>
    </isoform>
</comment>
<comment type="PTM">
    <text evidence="1">Phosphorylated by host SRPK1, SRPK2, and maybe protein kinase C or GAPDH. Phosphorylation is critical for pregenomic RNA packaging. Protein kinase C phosphorylation is stimulated by HBx protein and may play a role in transport of the viral genome to the nucleus at the late step during the viral replication cycle.</text>
</comment>
<comment type="similarity">
    <text evidence="1">Belongs to the orthohepadnavirus core antigen family.</text>
</comment>